<accession>B1VEX2</accession>
<reference key="1">
    <citation type="journal article" date="2008" name="J. Biotechnol.">
        <title>The lifestyle of Corynebacterium urealyticum derived from its complete genome sequence established by pyrosequencing.</title>
        <authorList>
            <person name="Tauch A."/>
            <person name="Trost E."/>
            <person name="Tilker A."/>
            <person name="Ludewig U."/>
            <person name="Schneiker S."/>
            <person name="Goesmann A."/>
            <person name="Arnold W."/>
            <person name="Bekel T."/>
            <person name="Brinkrolf K."/>
            <person name="Brune I."/>
            <person name="Goetker S."/>
            <person name="Kalinowski J."/>
            <person name="Kamp P.-B."/>
            <person name="Lobo F.P."/>
            <person name="Viehoever P."/>
            <person name="Weisshaar B."/>
            <person name="Soriano F."/>
            <person name="Droege M."/>
            <person name="Puehler A."/>
        </authorList>
    </citation>
    <scope>NUCLEOTIDE SEQUENCE [LARGE SCALE GENOMIC DNA]</scope>
    <source>
        <strain>ATCC 43042 / DSM 7109</strain>
    </source>
</reference>
<evidence type="ECO:0000255" key="1">
    <source>
        <dbReference type="HAMAP-Rule" id="MF_01307"/>
    </source>
</evidence>
<evidence type="ECO:0000256" key="2">
    <source>
        <dbReference type="SAM" id="MobiDB-lite"/>
    </source>
</evidence>
<evidence type="ECO:0000305" key="3"/>
<comment type="function">
    <text evidence="1">With S4 and S12 plays an important role in translational accuracy.</text>
</comment>
<comment type="function">
    <text evidence="1">Located at the back of the 30S subunit body where it stabilizes the conformation of the head with respect to the body.</text>
</comment>
<comment type="subunit">
    <text evidence="1">Part of the 30S ribosomal subunit. Contacts proteins S4 and S8.</text>
</comment>
<comment type="domain">
    <text>The N-terminal domain interacts with the head of the 30S subunit; the C-terminal domain interacts with the body and contacts protein S4. The interaction surface between S4 and S5 is involved in control of translational fidelity.</text>
</comment>
<comment type="similarity">
    <text evidence="1">Belongs to the universal ribosomal protein uS5 family.</text>
</comment>
<keyword id="KW-1185">Reference proteome</keyword>
<keyword id="KW-0687">Ribonucleoprotein</keyword>
<keyword id="KW-0689">Ribosomal protein</keyword>
<keyword id="KW-0694">RNA-binding</keyword>
<keyword id="KW-0699">rRNA-binding</keyword>
<proteinExistence type="inferred from homology"/>
<feature type="chain" id="PRO_1000140851" description="Small ribosomal subunit protein uS5">
    <location>
        <begin position="1"/>
        <end position="213"/>
    </location>
</feature>
<feature type="domain" description="S5 DRBM" evidence="1">
    <location>
        <begin position="45"/>
        <end position="108"/>
    </location>
</feature>
<feature type="region of interest" description="Disordered" evidence="2">
    <location>
        <begin position="1"/>
        <end position="42"/>
    </location>
</feature>
<dbReference type="EMBL" id="AM942444">
    <property type="protein sequence ID" value="CAQ04311.1"/>
    <property type="molecule type" value="Genomic_DNA"/>
</dbReference>
<dbReference type="RefSeq" id="WP_012359604.1">
    <property type="nucleotide sequence ID" value="NC_010545.1"/>
</dbReference>
<dbReference type="SMR" id="B1VEX2"/>
<dbReference type="STRING" id="504474.cu0351"/>
<dbReference type="GeneID" id="60605154"/>
<dbReference type="KEGG" id="cur:cu0351"/>
<dbReference type="eggNOG" id="COG0098">
    <property type="taxonomic scope" value="Bacteria"/>
</dbReference>
<dbReference type="HOGENOM" id="CLU_065898_2_1_11"/>
<dbReference type="Proteomes" id="UP000001727">
    <property type="component" value="Chromosome"/>
</dbReference>
<dbReference type="GO" id="GO:0015935">
    <property type="term" value="C:small ribosomal subunit"/>
    <property type="evidence" value="ECO:0007669"/>
    <property type="project" value="InterPro"/>
</dbReference>
<dbReference type="GO" id="GO:0019843">
    <property type="term" value="F:rRNA binding"/>
    <property type="evidence" value="ECO:0007669"/>
    <property type="project" value="UniProtKB-UniRule"/>
</dbReference>
<dbReference type="GO" id="GO:0003735">
    <property type="term" value="F:structural constituent of ribosome"/>
    <property type="evidence" value="ECO:0007669"/>
    <property type="project" value="InterPro"/>
</dbReference>
<dbReference type="GO" id="GO:0006412">
    <property type="term" value="P:translation"/>
    <property type="evidence" value="ECO:0007669"/>
    <property type="project" value="UniProtKB-UniRule"/>
</dbReference>
<dbReference type="FunFam" id="3.30.160.20:FF:000001">
    <property type="entry name" value="30S ribosomal protein S5"/>
    <property type="match status" value="1"/>
</dbReference>
<dbReference type="FunFam" id="3.30.230.10:FF:000002">
    <property type="entry name" value="30S ribosomal protein S5"/>
    <property type="match status" value="1"/>
</dbReference>
<dbReference type="Gene3D" id="3.30.160.20">
    <property type="match status" value="1"/>
</dbReference>
<dbReference type="Gene3D" id="3.30.230.10">
    <property type="match status" value="1"/>
</dbReference>
<dbReference type="HAMAP" id="MF_01307_B">
    <property type="entry name" value="Ribosomal_uS5_B"/>
    <property type="match status" value="1"/>
</dbReference>
<dbReference type="InterPro" id="IPR020568">
    <property type="entry name" value="Ribosomal_Su5_D2-typ_SF"/>
</dbReference>
<dbReference type="InterPro" id="IPR000851">
    <property type="entry name" value="Ribosomal_uS5"/>
</dbReference>
<dbReference type="InterPro" id="IPR005712">
    <property type="entry name" value="Ribosomal_uS5_bac-type"/>
</dbReference>
<dbReference type="InterPro" id="IPR005324">
    <property type="entry name" value="Ribosomal_uS5_C"/>
</dbReference>
<dbReference type="InterPro" id="IPR013810">
    <property type="entry name" value="Ribosomal_uS5_N"/>
</dbReference>
<dbReference type="InterPro" id="IPR018192">
    <property type="entry name" value="Ribosomal_uS5_N_CS"/>
</dbReference>
<dbReference type="InterPro" id="IPR014721">
    <property type="entry name" value="Ribsml_uS5_D2-typ_fold_subgr"/>
</dbReference>
<dbReference type="NCBIfam" id="TIGR01021">
    <property type="entry name" value="rpsE_bact"/>
    <property type="match status" value="1"/>
</dbReference>
<dbReference type="PANTHER" id="PTHR48277">
    <property type="entry name" value="MITOCHONDRIAL RIBOSOMAL PROTEIN S5"/>
    <property type="match status" value="1"/>
</dbReference>
<dbReference type="PANTHER" id="PTHR48277:SF1">
    <property type="entry name" value="MITOCHONDRIAL RIBOSOMAL PROTEIN S5"/>
    <property type="match status" value="1"/>
</dbReference>
<dbReference type="Pfam" id="PF00333">
    <property type="entry name" value="Ribosomal_S5"/>
    <property type="match status" value="1"/>
</dbReference>
<dbReference type="Pfam" id="PF03719">
    <property type="entry name" value="Ribosomal_S5_C"/>
    <property type="match status" value="1"/>
</dbReference>
<dbReference type="SUPFAM" id="SSF54768">
    <property type="entry name" value="dsRNA-binding domain-like"/>
    <property type="match status" value="1"/>
</dbReference>
<dbReference type="SUPFAM" id="SSF54211">
    <property type="entry name" value="Ribosomal protein S5 domain 2-like"/>
    <property type="match status" value="1"/>
</dbReference>
<dbReference type="PROSITE" id="PS00585">
    <property type="entry name" value="RIBOSOMAL_S5"/>
    <property type="match status" value="1"/>
</dbReference>
<dbReference type="PROSITE" id="PS50881">
    <property type="entry name" value="S5_DSRBD"/>
    <property type="match status" value="1"/>
</dbReference>
<organism>
    <name type="scientific">Corynebacterium urealyticum (strain ATCC 43042 / DSM 7109)</name>
    <dbReference type="NCBI Taxonomy" id="504474"/>
    <lineage>
        <taxon>Bacteria</taxon>
        <taxon>Bacillati</taxon>
        <taxon>Actinomycetota</taxon>
        <taxon>Actinomycetes</taxon>
        <taxon>Mycobacteriales</taxon>
        <taxon>Corynebacteriaceae</taxon>
        <taxon>Corynebacterium</taxon>
    </lineage>
</organism>
<name>RS5_CORU7</name>
<gene>
    <name evidence="1" type="primary">rpsE</name>
    <name type="ordered locus">cu0351</name>
</gene>
<sequence length="213" mass="22588">MSERDRNGGRSADNNRNDRNERGGRNDRGGRNDRRNNQQDERNQYIERVVTINRVSKVVKGGRRFSFTALVIVGDGQGMVGVGYGKAKEVPAAIQKGAEEARKNFFRVPMINGTITHPVQGEAAAGVVMLRPAAPGTGVIAGGAARPVLECAGVQDILCKSLGSPNAINVVHATVAGLKELVRPEEVAARRGKSLEEVAPAAMLRARAAGQGA</sequence>
<protein>
    <recommendedName>
        <fullName evidence="1">Small ribosomal subunit protein uS5</fullName>
    </recommendedName>
    <alternativeName>
        <fullName evidence="3">30S ribosomal protein S5</fullName>
    </alternativeName>
</protein>